<feature type="chain" id="PRO_1000080872" description="Thiazole synthase">
    <location>
        <begin position="1"/>
        <end position="262"/>
    </location>
</feature>
<feature type="region of interest" description="Disordered" evidence="2">
    <location>
        <begin position="243"/>
        <end position="262"/>
    </location>
</feature>
<feature type="active site" description="Schiff-base intermediate with DXP" evidence="1">
    <location>
        <position position="97"/>
    </location>
</feature>
<feature type="binding site" evidence="1">
    <location>
        <position position="158"/>
    </location>
    <ligand>
        <name>1-deoxy-D-xylulose 5-phosphate</name>
        <dbReference type="ChEBI" id="CHEBI:57792"/>
    </ligand>
</feature>
<feature type="binding site" evidence="1">
    <location>
        <begin position="185"/>
        <end position="186"/>
    </location>
    <ligand>
        <name>1-deoxy-D-xylulose 5-phosphate</name>
        <dbReference type="ChEBI" id="CHEBI:57792"/>
    </ligand>
</feature>
<feature type="binding site" evidence="1">
    <location>
        <begin position="207"/>
        <end position="208"/>
    </location>
    <ligand>
        <name>1-deoxy-D-xylulose 5-phosphate</name>
        <dbReference type="ChEBI" id="CHEBI:57792"/>
    </ligand>
</feature>
<comment type="function">
    <text evidence="1">Catalyzes the rearrangement of 1-deoxy-D-xylulose 5-phosphate (DXP) to produce the thiazole phosphate moiety of thiamine. Sulfur is provided by the thiocarboxylate moiety of the carrier protein ThiS. In vitro, sulfur can be provided by H(2)S.</text>
</comment>
<comment type="catalytic activity">
    <reaction evidence="1">
        <text>[ThiS sulfur-carrier protein]-C-terminal-Gly-aminoethanethioate + 2-iminoacetate + 1-deoxy-D-xylulose 5-phosphate = [ThiS sulfur-carrier protein]-C-terminal Gly-Gly + 2-[(2R,5Z)-2-carboxy-4-methylthiazol-5(2H)-ylidene]ethyl phosphate + 2 H2O + H(+)</text>
        <dbReference type="Rhea" id="RHEA:26297"/>
        <dbReference type="Rhea" id="RHEA-COMP:12909"/>
        <dbReference type="Rhea" id="RHEA-COMP:19908"/>
        <dbReference type="ChEBI" id="CHEBI:15377"/>
        <dbReference type="ChEBI" id="CHEBI:15378"/>
        <dbReference type="ChEBI" id="CHEBI:57792"/>
        <dbReference type="ChEBI" id="CHEBI:62899"/>
        <dbReference type="ChEBI" id="CHEBI:77846"/>
        <dbReference type="ChEBI" id="CHEBI:90778"/>
        <dbReference type="ChEBI" id="CHEBI:232372"/>
        <dbReference type="EC" id="2.8.1.10"/>
    </reaction>
</comment>
<comment type="pathway">
    <text evidence="1">Cofactor biosynthesis; thiamine diphosphate biosynthesis.</text>
</comment>
<comment type="subunit">
    <text evidence="1">Homotetramer. Forms heterodimers with either ThiH or ThiS.</text>
</comment>
<comment type="subcellular location">
    <subcellularLocation>
        <location evidence="1">Cytoplasm</location>
    </subcellularLocation>
</comment>
<comment type="similarity">
    <text evidence="1">Belongs to the ThiG family.</text>
</comment>
<evidence type="ECO:0000255" key="1">
    <source>
        <dbReference type="HAMAP-Rule" id="MF_00443"/>
    </source>
</evidence>
<evidence type="ECO:0000256" key="2">
    <source>
        <dbReference type="SAM" id="MobiDB-lite"/>
    </source>
</evidence>
<protein>
    <recommendedName>
        <fullName evidence="1">Thiazole synthase</fullName>
        <ecNumber evidence="1">2.8.1.10</ecNumber>
    </recommendedName>
</protein>
<sequence length="262" mass="28231">MLTLYSETFPSRLLLGTAAYPTPEILKQSVRTARPAMITVSLRRAGCGGEAHGQGFWSLLQETGVPVLPNTAGCQSVQEAVTTAQMAREVFETDWIKLELIGDDDTLQPDVFQLVEAAEILIKDGFKVLPYCTEDLIACRRLLDVGCQALMPWAAPIGTGLGAVHAYALNVLRERLPYTPLIIDAGLGLPSQAAQVMEWGFDGVLLNTAVSRSGDPVNMARAFALAVESGRLAFEAGPVEARDKAQASTPTVGQPFWHSAEY</sequence>
<organism>
    <name type="scientific">Neisseria meningitidis serogroup C (strain 053442)</name>
    <dbReference type="NCBI Taxonomy" id="374833"/>
    <lineage>
        <taxon>Bacteria</taxon>
        <taxon>Pseudomonadati</taxon>
        <taxon>Pseudomonadota</taxon>
        <taxon>Betaproteobacteria</taxon>
        <taxon>Neisseriales</taxon>
        <taxon>Neisseriaceae</taxon>
        <taxon>Neisseria</taxon>
    </lineage>
</organism>
<keyword id="KW-0963">Cytoplasm</keyword>
<keyword id="KW-0704">Schiff base</keyword>
<keyword id="KW-0784">Thiamine biosynthesis</keyword>
<keyword id="KW-0808">Transferase</keyword>
<proteinExistence type="inferred from homology"/>
<dbReference type="EC" id="2.8.1.10" evidence="1"/>
<dbReference type="EMBL" id="CP000381">
    <property type="protein sequence ID" value="ABX72333.1"/>
    <property type="molecule type" value="Genomic_DNA"/>
</dbReference>
<dbReference type="RefSeq" id="WP_002238793.1">
    <property type="nucleotide sequence ID" value="NC_010120.1"/>
</dbReference>
<dbReference type="SMR" id="A9M072"/>
<dbReference type="KEGG" id="nmn:NMCC_0114"/>
<dbReference type="HOGENOM" id="CLU_062233_1_0_4"/>
<dbReference type="UniPathway" id="UPA00060"/>
<dbReference type="Proteomes" id="UP000001177">
    <property type="component" value="Chromosome"/>
</dbReference>
<dbReference type="GO" id="GO:0005737">
    <property type="term" value="C:cytoplasm"/>
    <property type="evidence" value="ECO:0007669"/>
    <property type="project" value="UniProtKB-SubCell"/>
</dbReference>
<dbReference type="GO" id="GO:1990107">
    <property type="term" value="F:thiazole synthase activity"/>
    <property type="evidence" value="ECO:0007669"/>
    <property type="project" value="UniProtKB-EC"/>
</dbReference>
<dbReference type="GO" id="GO:0009229">
    <property type="term" value="P:thiamine diphosphate biosynthetic process"/>
    <property type="evidence" value="ECO:0007669"/>
    <property type="project" value="UniProtKB-UniRule"/>
</dbReference>
<dbReference type="CDD" id="cd04728">
    <property type="entry name" value="ThiG"/>
    <property type="match status" value="1"/>
</dbReference>
<dbReference type="Gene3D" id="3.20.20.70">
    <property type="entry name" value="Aldolase class I"/>
    <property type="match status" value="1"/>
</dbReference>
<dbReference type="HAMAP" id="MF_00443">
    <property type="entry name" value="ThiG"/>
    <property type="match status" value="1"/>
</dbReference>
<dbReference type="InterPro" id="IPR013785">
    <property type="entry name" value="Aldolase_TIM"/>
</dbReference>
<dbReference type="InterPro" id="IPR033983">
    <property type="entry name" value="Thiazole_synthase_ThiG"/>
</dbReference>
<dbReference type="InterPro" id="IPR008867">
    <property type="entry name" value="ThiG"/>
</dbReference>
<dbReference type="PANTHER" id="PTHR34266">
    <property type="entry name" value="THIAZOLE SYNTHASE"/>
    <property type="match status" value="1"/>
</dbReference>
<dbReference type="PANTHER" id="PTHR34266:SF2">
    <property type="entry name" value="THIAZOLE SYNTHASE"/>
    <property type="match status" value="1"/>
</dbReference>
<dbReference type="Pfam" id="PF05690">
    <property type="entry name" value="ThiG"/>
    <property type="match status" value="1"/>
</dbReference>
<dbReference type="SUPFAM" id="SSF110399">
    <property type="entry name" value="ThiG-like"/>
    <property type="match status" value="1"/>
</dbReference>
<accession>A9M072</accession>
<gene>
    <name evidence="1" type="primary">thiG</name>
    <name type="ordered locus">NMCC_0114</name>
</gene>
<name>THIG_NEIM0</name>
<reference key="1">
    <citation type="journal article" date="2008" name="Genomics">
        <title>Characterization of ST-4821 complex, a unique Neisseria meningitidis clone.</title>
        <authorList>
            <person name="Peng J."/>
            <person name="Yang L."/>
            <person name="Yang F."/>
            <person name="Yang J."/>
            <person name="Yan Y."/>
            <person name="Nie H."/>
            <person name="Zhang X."/>
            <person name="Xiong Z."/>
            <person name="Jiang Y."/>
            <person name="Cheng F."/>
            <person name="Xu X."/>
            <person name="Chen S."/>
            <person name="Sun L."/>
            <person name="Li W."/>
            <person name="Shen Y."/>
            <person name="Shao Z."/>
            <person name="Liang X."/>
            <person name="Xu J."/>
            <person name="Jin Q."/>
        </authorList>
    </citation>
    <scope>NUCLEOTIDE SEQUENCE [LARGE SCALE GENOMIC DNA]</scope>
    <source>
        <strain>053442</strain>
    </source>
</reference>